<proteinExistence type="evidence at transcript level"/>
<organism>
    <name type="scientific">Danio rerio</name>
    <name type="common">Zebrafish</name>
    <name type="synonym">Brachydanio rerio</name>
    <dbReference type="NCBI Taxonomy" id="7955"/>
    <lineage>
        <taxon>Eukaryota</taxon>
        <taxon>Metazoa</taxon>
        <taxon>Chordata</taxon>
        <taxon>Craniata</taxon>
        <taxon>Vertebrata</taxon>
        <taxon>Euteleostomi</taxon>
        <taxon>Actinopterygii</taxon>
        <taxon>Neopterygii</taxon>
        <taxon>Teleostei</taxon>
        <taxon>Ostariophysi</taxon>
        <taxon>Cypriniformes</taxon>
        <taxon>Danionidae</taxon>
        <taxon>Danioninae</taxon>
        <taxon>Danio</taxon>
    </lineage>
</organism>
<comment type="function">
    <text evidence="1">Polycomb group (PcG) protein. Component of the prc2/eed-ezh2 complex, which methylates 'Lys-9' and 'Lys-27' of histone H3, leading to transcriptional repression of the affected target gene (By similarity).</text>
</comment>
<comment type="subunit">
    <text evidence="1">Component of the prc2/eed-ezh2 complex.</text>
</comment>
<comment type="subcellular location">
    <subcellularLocation>
        <location evidence="1">Nucleus</location>
    </subcellularLocation>
</comment>
<comment type="similarity">
    <text evidence="3">Belongs to the WD repeat ESC family.</text>
</comment>
<comment type="sequence caution" evidence="3">
    <conflict type="erroneous initiation">
        <sequence resource="EMBL-CDS" id="AAH93351"/>
    </conflict>
</comment>
<feature type="chain" id="PRO_0000343728" description="Polycomb protein eed">
    <location>
        <begin position="1"/>
        <end position="443"/>
    </location>
</feature>
<feature type="repeat" description="WD 1">
    <location>
        <begin position="93"/>
        <end position="136"/>
    </location>
</feature>
<feature type="repeat" description="WD 2">
    <location>
        <begin position="148"/>
        <end position="187"/>
    </location>
</feature>
<feature type="repeat" description="WD 3">
    <location>
        <begin position="190"/>
        <end position="230"/>
    </location>
</feature>
<feature type="repeat" description="WD 4">
    <location>
        <begin position="236"/>
        <end position="277"/>
    </location>
</feature>
<feature type="repeat" description="WD 5">
    <location>
        <begin position="306"/>
        <end position="343"/>
    </location>
</feature>
<feature type="repeat" description="WD 6">
    <location>
        <begin position="361"/>
        <end position="401"/>
    </location>
</feature>
<feature type="repeat" description="WD 7">
    <location>
        <begin position="410"/>
        <end position="443"/>
    </location>
</feature>
<feature type="region of interest" description="Disordered" evidence="2">
    <location>
        <begin position="1"/>
        <end position="74"/>
    </location>
</feature>
<feature type="compositionally biased region" description="Basic and acidic residues" evidence="2">
    <location>
        <begin position="1"/>
        <end position="14"/>
    </location>
</feature>
<protein>
    <recommendedName>
        <fullName>Polycomb protein eed</fullName>
    </recommendedName>
</protein>
<dbReference type="EMBL" id="BC093351">
    <property type="protein sequence ID" value="AAH93351.1"/>
    <property type="status" value="ALT_INIT"/>
    <property type="molecule type" value="mRNA"/>
</dbReference>
<dbReference type="EMBL" id="BC153556">
    <property type="protein sequence ID" value="AAI53557.1"/>
    <property type="molecule type" value="mRNA"/>
</dbReference>
<dbReference type="SMR" id="Q566T0"/>
<dbReference type="FunCoup" id="Q566T0">
    <property type="interactions" value="1533"/>
</dbReference>
<dbReference type="STRING" id="7955.ENSDARP00000131820"/>
<dbReference type="PaxDb" id="7955-ENSDARP00000059344"/>
<dbReference type="Ensembl" id="ENSDART00000162928">
    <property type="protein sequence ID" value="ENSDARP00000131820"/>
    <property type="gene ID" value="ENSDARG00000099640"/>
</dbReference>
<dbReference type="AGR" id="ZFIN:ZDB-GENE-050417-287"/>
<dbReference type="ZFIN" id="ZDB-GENE-050417-287">
    <property type="gene designation" value="eed"/>
</dbReference>
<dbReference type="eggNOG" id="KOG1034">
    <property type="taxonomic scope" value="Eukaryota"/>
</dbReference>
<dbReference type="HOGENOM" id="CLU_032683_1_0_1"/>
<dbReference type="InParanoid" id="Q566T0"/>
<dbReference type="OMA" id="RDVHRNY"/>
<dbReference type="PhylomeDB" id="Q566T0"/>
<dbReference type="TreeFam" id="TF314451"/>
<dbReference type="Reactome" id="R-DRE-212300">
    <property type="pathway name" value="PRC2 methylates histones and DNA"/>
</dbReference>
<dbReference type="Reactome" id="R-DRE-2559580">
    <property type="pathway name" value="Oxidative Stress Induced Senescence"/>
</dbReference>
<dbReference type="PRO" id="PR:Q566T0"/>
<dbReference type="Proteomes" id="UP000000437">
    <property type="component" value="Unplaced"/>
</dbReference>
<dbReference type="Bgee" id="ENSDARG00000099640">
    <property type="expression patterns" value="Expressed in mature ovarian follicle and 38 other cell types or tissues"/>
</dbReference>
<dbReference type="GO" id="GO:0035098">
    <property type="term" value="C:ESC/E(Z) complex"/>
    <property type="evidence" value="ECO:0000250"/>
    <property type="project" value="UniProtKB"/>
</dbReference>
<dbReference type="GO" id="GO:0048565">
    <property type="term" value="P:digestive tract development"/>
    <property type="evidence" value="ECO:0000315"/>
    <property type="project" value="ZFIN"/>
</dbReference>
<dbReference type="GO" id="GO:0031017">
    <property type="term" value="P:exocrine pancreas development"/>
    <property type="evidence" value="ECO:0000315"/>
    <property type="project" value="ZFIN"/>
</dbReference>
<dbReference type="GO" id="GO:0031507">
    <property type="term" value="P:heterochromatin formation"/>
    <property type="evidence" value="ECO:0000318"/>
    <property type="project" value="GO_Central"/>
</dbReference>
<dbReference type="GO" id="GO:0001889">
    <property type="term" value="P:liver development"/>
    <property type="evidence" value="ECO:0000315"/>
    <property type="project" value="ZFIN"/>
</dbReference>
<dbReference type="GO" id="GO:0000122">
    <property type="term" value="P:negative regulation of transcription by RNA polymerase II"/>
    <property type="evidence" value="ECO:0000318"/>
    <property type="project" value="GO_Central"/>
</dbReference>
<dbReference type="GO" id="GO:0045685">
    <property type="term" value="P:regulation of glial cell differentiation"/>
    <property type="evidence" value="ECO:0000315"/>
    <property type="project" value="ZFIN"/>
</dbReference>
<dbReference type="GO" id="GO:0045664">
    <property type="term" value="P:regulation of neuron differentiation"/>
    <property type="evidence" value="ECO:0000315"/>
    <property type="project" value="ZFIN"/>
</dbReference>
<dbReference type="FunFam" id="2.130.10.10:FF:000056">
    <property type="entry name" value="Polycomb protein eed"/>
    <property type="match status" value="1"/>
</dbReference>
<dbReference type="Gene3D" id="2.130.10.10">
    <property type="entry name" value="YVTN repeat-like/Quinoprotein amine dehydrogenase"/>
    <property type="match status" value="1"/>
</dbReference>
<dbReference type="InterPro" id="IPR051243">
    <property type="entry name" value="PcG_WD-repeat"/>
</dbReference>
<dbReference type="InterPro" id="IPR015943">
    <property type="entry name" value="WD40/YVTN_repeat-like_dom_sf"/>
</dbReference>
<dbReference type="InterPro" id="IPR019775">
    <property type="entry name" value="WD40_repeat_CS"/>
</dbReference>
<dbReference type="InterPro" id="IPR036322">
    <property type="entry name" value="WD40_repeat_dom_sf"/>
</dbReference>
<dbReference type="InterPro" id="IPR001680">
    <property type="entry name" value="WD40_rpt"/>
</dbReference>
<dbReference type="PANTHER" id="PTHR10253">
    <property type="entry name" value="POLYCOMB PROTEIN"/>
    <property type="match status" value="1"/>
</dbReference>
<dbReference type="Pfam" id="PF00400">
    <property type="entry name" value="WD40"/>
    <property type="match status" value="2"/>
</dbReference>
<dbReference type="SMART" id="SM00320">
    <property type="entry name" value="WD40"/>
    <property type="match status" value="6"/>
</dbReference>
<dbReference type="SUPFAM" id="SSF50978">
    <property type="entry name" value="WD40 repeat-like"/>
    <property type="match status" value="1"/>
</dbReference>
<dbReference type="PROSITE" id="PS00678">
    <property type="entry name" value="WD_REPEATS_1"/>
    <property type="match status" value="1"/>
</dbReference>
<dbReference type="PROSITE" id="PS50082">
    <property type="entry name" value="WD_REPEATS_2"/>
    <property type="match status" value="2"/>
</dbReference>
<dbReference type="PROSITE" id="PS50294">
    <property type="entry name" value="WD_REPEATS_REGION"/>
    <property type="match status" value="1"/>
</dbReference>
<name>EED_DANRE</name>
<reference key="1">
    <citation type="submission" date="2007-09" db="EMBL/GenBank/DDBJ databases">
        <authorList>
            <consortium name="NIH - Zebrafish Gene Collection (ZGC) project"/>
        </authorList>
    </citation>
    <scope>NUCLEOTIDE SEQUENCE [LARGE SCALE MRNA]</scope>
    <source>
        <tissue>Ovary</tissue>
    </source>
</reference>
<keyword id="KW-0156">Chromatin regulator</keyword>
<keyword id="KW-0539">Nucleus</keyword>
<keyword id="KW-1185">Reference proteome</keyword>
<keyword id="KW-0677">Repeat</keyword>
<keyword id="KW-0678">Repressor</keyword>
<keyword id="KW-0804">Transcription</keyword>
<keyword id="KW-0805">Transcription regulation</keyword>
<keyword id="KW-0853">WD repeat</keyword>
<accession>Q566T0</accession>
<accession>A8E5D5</accession>
<sequence>MKMRRKMSEPHGEAGNEMPNKKQKLSSDENSNPDLSGDDNDDAVSVESGTHPERPDTPTNTASAPGRKSWGKGKWKSKKCKYSFKCVNSLKEDHGQPLFGVQFNWHSKEGDPLVFATVGSNRVTLYECHSQGEIRLLQSYVDADADENFYTCAWTFDCSSSHPLLAVAGSRGIIRIINHITMQCVKHYVGHGNAINELKFHPRDPNLLLSVSKDHALRLWNIQTDTLVAIFGGVEGHRDEVLSADFDLLGEKIMSCGMDHSLKLWRLDSERLQRAIRGSYEYNPSKTNRPFVSQKIHFPDFSTRDIHRNYVDCVRWLGDLILSKSCENAIVCWKPGRMEDDIDRIKPNESNVTILGRFDYSQCDIWYMRFSMDFWQKMLALGNQVGKLYVWDLEVEDPHKAKCTTLTLPRCTSAIRQTSFSRDSSILIAVCDDASIWRWDRLR</sequence>
<gene>
    <name type="primary">eed</name>
    <name type="ORF">zgc:112509</name>
</gene>
<evidence type="ECO:0000250" key="1"/>
<evidence type="ECO:0000256" key="2">
    <source>
        <dbReference type="SAM" id="MobiDB-lite"/>
    </source>
</evidence>
<evidence type="ECO:0000305" key="3"/>